<sequence length="336" mass="36290">MLQTTNKPPLTIRLCQPRGFCAGVDRAIQIVVLALKKYGAPVYVRHEIVHNRYVVEGLQSLGAVFIEELSEIPAEHRRSPVVFSAHGVPKSVPADAQARNLFYLDATCPLVSKVHKQAMRHQRLGRHVLLIGHAGHPEVIGTMGQLPEGAVTLVETEADAARLVPADPKALGFVTQTTLSVEDTAGIIRALRERFPDLQAPAAESICYATTNRQEAVKDTAPGADLYLIVGAPNSSNSRRLVEVAERAGATMSLLVQRAAEIPWNDIGTISTLGLSAGASAPEIIVDEIIDAFRQRFDVTIDLAITATETEDFPVMRVLRDVELTPADMAFVNGAA</sequence>
<comment type="function">
    <text evidence="1">Catalyzes the conversion of 1-hydroxy-2-methyl-2-(E)-butenyl 4-diphosphate (HMBPP) into a mixture of isopentenyl diphosphate (IPP) and dimethylallyl diphosphate (DMAPP). Acts in the terminal step of the DOXP/MEP pathway for isoprenoid precursor biosynthesis.</text>
</comment>
<comment type="catalytic activity">
    <reaction evidence="1">
        <text>isopentenyl diphosphate + 2 oxidized [2Fe-2S]-[ferredoxin] + H2O = (2E)-4-hydroxy-3-methylbut-2-enyl diphosphate + 2 reduced [2Fe-2S]-[ferredoxin] + 2 H(+)</text>
        <dbReference type="Rhea" id="RHEA:24488"/>
        <dbReference type="Rhea" id="RHEA-COMP:10000"/>
        <dbReference type="Rhea" id="RHEA-COMP:10001"/>
        <dbReference type="ChEBI" id="CHEBI:15377"/>
        <dbReference type="ChEBI" id="CHEBI:15378"/>
        <dbReference type="ChEBI" id="CHEBI:33737"/>
        <dbReference type="ChEBI" id="CHEBI:33738"/>
        <dbReference type="ChEBI" id="CHEBI:128753"/>
        <dbReference type="ChEBI" id="CHEBI:128769"/>
        <dbReference type="EC" id="1.17.7.4"/>
    </reaction>
</comment>
<comment type="catalytic activity">
    <reaction evidence="1">
        <text>dimethylallyl diphosphate + 2 oxidized [2Fe-2S]-[ferredoxin] + H2O = (2E)-4-hydroxy-3-methylbut-2-enyl diphosphate + 2 reduced [2Fe-2S]-[ferredoxin] + 2 H(+)</text>
        <dbReference type="Rhea" id="RHEA:24825"/>
        <dbReference type="Rhea" id="RHEA-COMP:10000"/>
        <dbReference type="Rhea" id="RHEA-COMP:10001"/>
        <dbReference type="ChEBI" id="CHEBI:15377"/>
        <dbReference type="ChEBI" id="CHEBI:15378"/>
        <dbReference type="ChEBI" id="CHEBI:33737"/>
        <dbReference type="ChEBI" id="CHEBI:33738"/>
        <dbReference type="ChEBI" id="CHEBI:57623"/>
        <dbReference type="ChEBI" id="CHEBI:128753"/>
        <dbReference type="EC" id="1.17.7.4"/>
    </reaction>
</comment>
<comment type="cofactor">
    <cofactor evidence="1">
        <name>[4Fe-4S] cluster</name>
        <dbReference type="ChEBI" id="CHEBI:49883"/>
    </cofactor>
    <text evidence="1">Binds 1 [4Fe-4S] cluster per subunit.</text>
</comment>
<comment type="pathway">
    <text evidence="1">Isoprenoid biosynthesis; dimethylallyl diphosphate biosynthesis; dimethylallyl diphosphate from (2E)-4-hydroxy-3-methylbutenyl diphosphate: step 1/1.</text>
</comment>
<comment type="pathway">
    <text evidence="1">Isoprenoid biosynthesis; isopentenyl diphosphate biosynthesis via DXP pathway; isopentenyl diphosphate from 1-deoxy-D-xylulose 5-phosphate: step 6/6.</text>
</comment>
<comment type="similarity">
    <text evidence="1">Belongs to the IspH family.</text>
</comment>
<dbReference type="EC" id="1.17.7.4" evidence="1"/>
<dbReference type="EMBL" id="BA000012">
    <property type="protein sequence ID" value="BAB53590.1"/>
    <property type="molecule type" value="Genomic_DNA"/>
</dbReference>
<dbReference type="RefSeq" id="WP_010914897.1">
    <property type="nucleotide sequence ID" value="NC_002678.2"/>
</dbReference>
<dbReference type="SMR" id="Q985W3"/>
<dbReference type="GeneID" id="66685229"/>
<dbReference type="KEGG" id="mlo:mlr7502"/>
<dbReference type="eggNOG" id="COG0761">
    <property type="taxonomic scope" value="Bacteria"/>
</dbReference>
<dbReference type="HOGENOM" id="CLU_027486_1_0_5"/>
<dbReference type="UniPathway" id="UPA00056">
    <property type="reaction ID" value="UER00097"/>
</dbReference>
<dbReference type="UniPathway" id="UPA00059">
    <property type="reaction ID" value="UER00105"/>
</dbReference>
<dbReference type="Proteomes" id="UP000000552">
    <property type="component" value="Chromosome"/>
</dbReference>
<dbReference type="GO" id="GO:0051539">
    <property type="term" value="F:4 iron, 4 sulfur cluster binding"/>
    <property type="evidence" value="ECO:0007669"/>
    <property type="project" value="UniProtKB-UniRule"/>
</dbReference>
<dbReference type="GO" id="GO:0051745">
    <property type="term" value="F:4-hydroxy-3-methylbut-2-enyl diphosphate reductase activity"/>
    <property type="evidence" value="ECO:0007669"/>
    <property type="project" value="UniProtKB-UniRule"/>
</dbReference>
<dbReference type="GO" id="GO:0046872">
    <property type="term" value="F:metal ion binding"/>
    <property type="evidence" value="ECO:0007669"/>
    <property type="project" value="UniProtKB-KW"/>
</dbReference>
<dbReference type="GO" id="GO:0050992">
    <property type="term" value="P:dimethylallyl diphosphate biosynthetic process"/>
    <property type="evidence" value="ECO:0007669"/>
    <property type="project" value="UniProtKB-UniRule"/>
</dbReference>
<dbReference type="GO" id="GO:0019288">
    <property type="term" value="P:isopentenyl diphosphate biosynthetic process, methylerythritol 4-phosphate pathway"/>
    <property type="evidence" value="ECO:0007669"/>
    <property type="project" value="UniProtKB-UniRule"/>
</dbReference>
<dbReference type="GO" id="GO:0016114">
    <property type="term" value="P:terpenoid biosynthetic process"/>
    <property type="evidence" value="ECO:0007669"/>
    <property type="project" value="UniProtKB-UniRule"/>
</dbReference>
<dbReference type="CDD" id="cd13944">
    <property type="entry name" value="lytB_ispH"/>
    <property type="match status" value="1"/>
</dbReference>
<dbReference type="Gene3D" id="3.40.50.11270">
    <property type="match status" value="1"/>
</dbReference>
<dbReference type="Gene3D" id="3.40.1010.20">
    <property type="entry name" value="4-hydroxy-3-methylbut-2-enyl diphosphate reductase, catalytic domain"/>
    <property type="match status" value="2"/>
</dbReference>
<dbReference type="HAMAP" id="MF_00191">
    <property type="entry name" value="IspH"/>
    <property type="match status" value="1"/>
</dbReference>
<dbReference type="InterPro" id="IPR003451">
    <property type="entry name" value="LytB/IspH"/>
</dbReference>
<dbReference type="NCBIfam" id="TIGR00216">
    <property type="entry name" value="ispH_lytB"/>
    <property type="match status" value="1"/>
</dbReference>
<dbReference type="NCBIfam" id="NF002190">
    <property type="entry name" value="PRK01045.1-4"/>
    <property type="match status" value="1"/>
</dbReference>
<dbReference type="PANTHER" id="PTHR30426">
    <property type="entry name" value="4-HYDROXY-3-METHYLBUT-2-ENYL DIPHOSPHATE REDUCTASE"/>
    <property type="match status" value="1"/>
</dbReference>
<dbReference type="PANTHER" id="PTHR30426:SF0">
    <property type="entry name" value="4-HYDROXY-3-METHYLBUT-2-ENYL DIPHOSPHATE REDUCTASE"/>
    <property type="match status" value="1"/>
</dbReference>
<dbReference type="Pfam" id="PF02401">
    <property type="entry name" value="LYTB"/>
    <property type="match status" value="1"/>
</dbReference>
<feature type="chain" id="PRO_0000128862" description="4-hydroxy-3-methylbut-2-enyl diphosphate reductase">
    <location>
        <begin position="1"/>
        <end position="336"/>
    </location>
</feature>
<feature type="active site" description="Proton donor" evidence="1">
    <location>
        <position position="138"/>
    </location>
</feature>
<feature type="binding site" evidence="1">
    <location>
        <position position="21"/>
    </location>
    <ligand>
        <name>[4Fe-4S] cluster</name>
        <dbReference type="ChEBI" id="CHEBI:49883"/>
    </ligand>
</feature>
<feature type="binding site" evidence="1">
    <location>
        <position position="50"/>
    </location>
    <ligand>
        <name>(2E)-4-hydroxy-3-methylbut-2-enyl diphosphate</name>
        <dbReference type="ChEBI" id="CHEBI:128753"/>
    </ligand>
</feature>
<feature type="binding site" evidence="1">
    <location>
        <position position="50"/>
    </location>
    <ligand>
        <name>dimethylallyl diphosphate</name>
        <dbReference type="ChEBI" id="CHEBI:57623"/>
    </ligand>
</feature>
<feature type="binding site" evidence="1">
    <location>
        <position position="50"/>
    </location>
    <ligand>
        <name>isopentenyl diphosphate</name>
        <dbReference type="ChEBI" id="CHEBI:128769"/>
    </ligand>
</feature>
<feature type="binding site" evidence="1">
    <location>
        <position position="86"/>
    </location>
    <ligand>
        <name>(2E)-4-hydroxy-3-methylbut-2-enyl diphosphate</name>
        <dbReference type="ChEBI" id="CHEBI:128753"/>
    </ligand>
</feature>
<feature type="binding site" evidence="1">
    <location>
        <position position="86"/>
    </location>
    <ligand>
        <name>dimethylallyl diphosphate</name>
        <dbReference type="ChEBI" id="CHEBI:57623"/>
    </ligand>
</feature>
<feature type="binding site" evidence="1">
    <location>
        <position position="86"/>
    </location>
    <ligand>
        <name>isopentenyl diphosphate</name>
        <dbReference type="ChEBI" id="CHEBI:128769"/>
    </ligand>
</feature>
<feature type="binding site" evidence="1">
    <location>
        <position position="108"/>
    </location>
    <ligand>
        <name>[4Fe-4S] cluster</name>
        <dbReference type="ChEBI" id="CHEBI:49883"/>
    </ligand>
</feature>
<feature type="binding site" evidence="1">
    <location>
        <position position="136"/>
    </location>
    <ligand>
        <name>(2E)-4-hydroxy-3-methylbut-2-enyl diphosphate</name>
        <dbReference type="ChEBI" id="CHEBI:128753"/>
    </ligand>
</feature>
<feature type="binding site" evidence="1">
    <location>
        <position position="136"/>
    </location>
    <ligand>
        <name>dimethylallyl diphosphate</name>
        <dbReference type="ChEBI" id="CHEBI:57623"/>
    </ligand>
</feature>
<feature type="binding site" evidence="1">
    <location>
        <position position="136"/>
    </location>
    <ligand>
        <name>isopentenyl diphosphate</name>
        <dbReference type="ChEBI" id="CHEBI:128769"/>
    </ligand>
</feature>
<feature type="binding site" evidence="1">
    <location>
        <position position="177"/>
    </location>
    <ligand>
        <name>(2E)-4-hydroxy-3-methylbut-2-enyl diphosphate</name>
        <dbReference type="ChEBI" id="CHEBI:128753"/>
    </ligand>
</feature>
<feature type="binding site" evidence="1">
    <location>
        <position position="207"/>
    </location>
    <ligand>
        <name>[4Fe-4S] cluster</name>
        <dbReference type="ChEBI" id="CHEBI:49883"/>
    </ligand>
</feature>
<feature type="binding site" evidence="1">
    <location>
        <position position="235"/>
    </location>
    <ligand>
        <name>(2E)-4-hydroxy-3-methylbut-2-enyl diphosphate</name>
        <dbReference type="ChEBI" id="CHEBI:128753"/>
    </ligand>
</feature>
<feature type="binding site" evidence="1">
    <location>
        <position position="235"/>
    </location>
    <ligand>
        <name>dimethylallyl diphosphate</name>
        <dbReference type="ChEBI" id="CHEBI:57623"/>
    </ligand>
</feature>
<feature type="binding site" evidence="1">
    <location>
        <position position="235"/>
    </location>
    <ligand>
        <name>isopentenyl diphosphate</name>
        <dbReference type="ChEBI" id="CHEBI:128769"/>
    </ligand>
</feature>
<feature type="binding site" evidence="1">
    <location>
        <position position="236"/>
    </location>
    <ligand>
        <name>(2E)-4-hydroxy-3-methylbut-2-enyl diphosphate</name>
        <dbReference type="ChEBI" id="CHEBI:128753"/>
    </ligand>
</feature>
<feature type="binding site" evidence="1">
    <location>
        <position position="236"/>
    </location>
    <ligand>
        <name>dimethylallyl diphosphate</name>
        <dbReference type="ChEBI" id="CHEBI:57623"/>
    </ligand>
</feature>
<feature type="binding site" evidence="1">
    <location>
        <position position="236"/>
    </location>
    <ligand>
        <name>isopentenyl diphosphate</name>
        <dbReference type="ChEBI" id="CHEBI:128769"/>
    </ligand>
</feature>
<feature type="binding site" evidence="1">
    <location>
        <position position="237"/>
    </location>
    <ligand>
        <name>(2E)-4-hydroxy-3-methylbut-2-enyl diphosphate</name>
        <dbReference type="ChEBI" id="CHEBI:128753"/>
    </ligand>
</feature>
<feature type="binding site" evidence="1">
    <location>
        <position position="237"/>
    </location>
    <ligand>
        <name>dimethylallyl diphosphate</name>
        <dbReference type="ChEBI" id="CHEBI:57623"/>
    </ligand>
</feature>
<feature type="binding site" evidence="1">
    <location>
        <position position="237"/>
    </location>
    <ligand>
        <name>isopentenyl diphosphate</name>
        <dbReference type="ChEBI" id="CHEBI:128769"/>
    </ligand>
</feature>
<feature type="binding site" evidence="1">
    <location>
        <position position="280"/>
    </location>
    <ligand>
        <name>(2E)-4-hydroxy-3-methylbut-2-enyl diphosphate</name>
        <dbReference type="ChEBI" id="CHEBI:128753"/>
    </ligand>
</feature>
<feature type="binding site" evidence="1">
    <location>
        <position position="280"/>
    </location>
    <ligand>
        <name>dimethylallyl diphosphate</name>
        <dbReference type="ChEBI" id="CHEBI:57623"/>
    </ligand>
</feature>
<feature type="binding site" evidence="1">
    <location>
        <position position="280"/>
    </location>
    <ligand>
        <name>isopentenyl diphosphate</name>
        <dbReference type="ChEBI" id="CHEBI:128769"/>
    </ligand>
</feature>
<reference key="1">
    <citation type="journal article" date="2000" name="DNA Res.">
        <title>Complete genome structure of the nitrogen-fixing symbiotic bacterium Mesorhizobium loti.</title>
        <authorList>
            <person name="Kaneko T."/>
            <person name="Nakamura Y."/>
            <person name="Sato S."/>
            <person name="Asamizu E."/>
            <person name="Kato T."/>
            <person name="Sasamoto S."/>
            <person name="Watanabe A."/>
            <person name="Idesawa K."/>
            <person name="Ishikawa A."/>
            <person name="Kawashima K."/>
            <person name="Kimura T."/>
            <person name="Kishida Y."/>
            <person name="Kiyokawa C."/>
            <person name="Kohara M."/>
            <person name="Matsumoto M."/>
            <person name="Matsuno A."/>
            <person name="Mochizuki Y."/>
            <person name="Nakayama S."/>
            <person name="Nakazaki N."/>
            <person name="Shimpo S."/>
            <person name="Sugimoto M."/>
            <person name="Takeuchi C."/>
            <person name="Yamada M."/>
            <person name="Tabata S."/>
        </authorList>
    </citation>
    <scope>NUCLEOTIDE SEQUENCE [LARGE SCALE GENOMIC DNA]</scope>
    <source>
        <strain>LMG 29417 / CECT 9101 / MAFF 303099</strain>
    </source>
</reference>
<keyword id="KW-0004">4Fe-4S</keyword>
<keyword id="KW-0408">Iron</keyword>
<keyword id="KW-0411">Iron-sulfur</keyword>
<keyword id="KW-0414">Isoprene biosynthesis</keyword>
<keyword id="KW-0479">Metal-binding</keyword>
<keyword id="KW-0560">Oxidoreductase</keyword>
<name>ISPH_RHILO</name>
<organism>
    <name type="scientific">Mesorhizobium japonicum (strain LMG 29417 / CECT 9101 / MAFF 303099)</name>
    <name type="common">Mesorhizobium loti (strain MAFF 303099)</name>
    <dbReference type="NCBI Taxonomy" id="266835"/>
    <lineage>
        <taxon>Bacteria</taxon>
        <taxon>Pseudomonadati</taxon>
        <taxon>Pseudomonadota</taxon>
        <taxon>Alphaproteobacteria</taxon>
        <taxon>Hyphomicrobiales</taxon>
        <taxon>Phyllobacteriaceae</taxon>
        <taxon>Mesorhizobium</taxon>
    </lineage>
</organism>
<protein>
    <recommendedName>
        <fullName evidence="1">4-hydroxy-3-methylbut-2-enyl diphosphate reductase</fullName>
        <shortName evidence="1">HMBPP reductase</shortName>
        <ecNumber evidence="1">1.17.7.4</ecNumber>
    </recommendedName>
</protein>
<proteinExistence type="inferred from homology"/>
<accession>Q985W3</accession>
<evidence type="ECO:0000255" key="1">
    <source>
        <dbReference type="HAMAP-Rule" id="MF_00191"/>
    </source>
</evidence>
<gene>
    <name evidence="1" type="primary">ispH</name>
    <name type="synonym">lytB</name>
    <name type="ordered locus">mlr7502</name>
</gene>